<gene>
    <name type="primary">rpl2-A</name>
</gene>
<gene>
    <name type="primary">rpl2-B</name>
</gene>
<comment type="subunit">
    <text evidence="1">Part of the 50S ribosomal subunit.</text>
</comment>
<comment type="subcellular location">
    <subcellularLocation>
        <location>Plastid</location>
    </subcellularLocation>
</comment>
<comment type="similarity">
    <text evidence="4">Belongs to the universal ribosomal protein uL2 family.</text>
</comment>
<geneLocation type="non-photosynthetic plastid"/>
<name>RK2_EPIVI</name>
<reference key="1">
    <citation type="journal article" date="1992" name="J. Mol. Evol.">
        <title>Rapid evolution of the plastid translational apparatus in a nonphotosynthetic plant: loss or accelerated sequence evolution of tRNA and ribosomal protein genes.</title>
        <authorList>
            <person name="Wolfe K.H."/>
            <person name="Morden C.W."/>
            <person name="Ems S.C."/>
            <person name="Palmer J.D."/>
        </authorList>
    </citation>
    <scope>NUCLEOTIDE SEQUENCE [GENOMIC DNA]</scope>
</reference>
<reference key="2">
    <citation type="journal article" date="1992" name="Proc. Natl. Acad. Sci. U.S.A.">
        <title>Function and evolution of a minimal plastid genome from a nonphotosynthetic parasitic plant.</title>
        <authorList>
            <person name="Wolfe K.H."/>
            <person name="Morden C.W."/>
            <person name="Palmer J.D."/>
        </authorList>
    </citation>
    <scope>NUCLEOTIDE SEQUENCE [LARGE SCALE GENOMIC DNA]</scope>
</reference>
<evidence type="ECO:0000250" key="1"/>
<evidence type="ECO:0000255" key="2">
    <source>
        <dbReference type="HAMAP-Rule" id="MF_01320"/>
    </source>
</evidence>
<evidence type="ECO:0000256" key="3">
    <source>
        <dbReference type="SAM" id="MobiDB-lite"/>
    </source>
</evidence>
<evidence type="ECO:0000305" key="4"/>
<keyword id="KW-0934">Plastid</keyword>
<keyword id="KW-0687">Ribonucleoprotein</keyword>
<keyword id="KW-0689">Ribosomal protein</keyword>
<sequence>MAIHLYKTSTPSTRNGTVYSQVKSNPRKNLIYGQHHCGKGRNVRGIITTRHRGGGHKRLYRKISFIRNEKYIYGRIITIEYDPNRNAYICLIHYGDGDKRYILHPRGAIIGDTLVSGTEVPIIIGNALPLTDMPLGTAIHNIEITLGKGGQLVRAAGAVAKLIAKEGKLATLKLPSGEVRLISKNCSATVGQVGNVGVNKKSLGRAGSKRWLGKRPVVRGVVMNPIDHPHGGGEGRAPIGRKKPTTPWGYPALGRRSRKINKYSDNFIVRRRSK</sequence>
<organism>
    <name type="scientific">Epifagus virginiana</name>
    <name type="common">Beechdrops</name>
    <name type="synonym">Orobanche virginiana</name>
    <dbReference type="NCBI Taxonomy" id="4177"/>
    <lineage>
        <taxon>Eukaryota</taxon>
        <taxon>Viridiplantae</taxon>
        <taxon>Streptophyta</taxon>
        <taxon>Embryophyta</taxon>
        <taxon>Tracheophyta</taxon>
        <taxon>Spermatophyta</taxon>
        <taxon>Magnoliopsida</taxon>
        <taxon>eudicotyledons</taxon>
        <taxon>Gunneridae</taxon>
        <taxon>Pentapetalae</taxon>
        <taxon>asterids</taxon>
        <taxon>lamiids</taxon>
        <taxon>Lamiales</taxon>
        <taxon>Orobanchaceae</taxon>
        <taxon>Orobancheae</taxon>
        <taxon>Epifagus</taxon>
    </lineage>
</organism>
<accession>P30065</accession>
<protein>
    <recommendedName>
        <fullName evidence="2">Large ribosomal subunit protein uL2cz/uL2cy</fullName>
    </recommendedName>
    <alternativeName>
        <fullName evidence="4">50S ribosomal protein L2, plastid</fullName>
    </alternativeName>
</protein>
<feature type="chain" id="PRO_0000129674" description="Large ribosomal subunit protein uL2cz/uL2cy">
    <location>
        <begin position="1"/>
        <end position="274"/>
    </location>
</feature>
<feature type="region of interest" description="Disordered" evidence="3">
    <location>
        <begin position="224"/>
        <end position="253"/>
    </location>
</feature>
<dbReference type="EMBL" id="M81884">
    <property type="protein sequence ID" value="AAA65866.1"/>
    <property type="molecule type" value="Genomic_DNA"/>
</dbReference>
<dbReference type="EMBL" id="M81884">
    <property type="protein sequence ID" value="AAA65874.1"/>
    <property type="molecule type" value="Genomic_DNA"/>
</dbReference>
<dbReference type="PIR" id="S78397">
    <property type="entry name" value="S78397"/>
</dbReference>
<dbReference type="SMR" id="P30065"/>
<dbReference type="GO" id="GO:0005762">
    <property type="term" value="C:mitochondrial large ribosomal subunit"/>
    <property type="evidence" value="ECO:0007669"/>
    <property type="project" value="TreeGrafter"/>
</dbReference>
<dbReference type="GO" id="GO:0009536">
    <property type="term" value="C:plastid"/>
    <property type="evidence" value="ECO:0007669"/>
    <property type="project" value="UniProtKB-SubCell"/>
</dbReference>
<dbReference type="GO" id="GO:0003723">
    <property type="term" value="F:RNA binding"/>
    <property type="evidence" value="ECO:0007669"/>
    <property type="project" value="InterPro"/>
</dbReference>
<dbReference type="GO" id="GO:0003735">
    <property type="term" value="F:structural constituent of ribosome"/>
    <property type="evidence" value="ECO:0007669"/>
    <property type="project" value="InterPro"/>
</dbReference>
<dbReference type="GO" id="GO:0016740">
    <property type="term" value="F:transferase activity"/>
    <property type="evidence" value="ECO:0007669"/>
    <property type="project" value="InterPro"/>
</dbReference>
<dbReference type="GO" id="GO:0032543">
    <property type="term" value="P:mitochondrial translation"/>
    <property type="evidence" value="ECO:0007669"/>
    <property type="project" value="TreeGrafter"/>
</dbReference>
<dbReference type="FunFam" id="4.10.950.10:FF:000001">
    <property type="entry name" value="50S ribosomal protein L2"/>
    <property type="match status" value="1"/>
</dbReference>
<dbReference type="FunFam" id="2.30.30.30:FF:000008">
    <property type="entry name" value="50S ribosomal protein L2, chloroplastic"/>
    <property type="match status" value="1"/>
</dbReference>
<dbReference type="FunFam" id="2.40.50.140:FF:000029">
    <property type="entry name" value="50S ribosomal protein L2, chloroplastic"/>
    <property type="match status" value="1"/>
</dbReference>
<dbReference type="Gene3D" id="2.30.30.30">
    <property type="match status" value="1"/>
</dbReference>
<dbReference type="Gene3D" id="2.40.50.140">
    <property type="entry name" value="Nucleic acid-binding proteins"/>
    <property type="match status" value="1"/>
</dbReference>
<dbReference type="Gene3D" id="4.10.950.10">
    <property type="entry name" value="Ribosomal protein L2, domain 3"/>
    <property type="match status" value="1"/>
</dbReference>
<dbReference type="HAMAP" id="MF_01320_B">
    <property type="entry name" value="Ribosomal_uL2_B"/>
    <property type="match status" value="1"/>
</dbReference>
<dbReference type="InterPro" id="IPR012340">
    <property type="entry name" value="NA-bd_OB-fold"/>
</dbReference>
<dbReference type="InterPro" id="IPR014722">
    <property type="entry name" value="Rib_uL2_dom2"/>
</dbReference>
<dbReference type="InterPro" id="IPR002171">
    <property type="entry name" value="Ribosomal_uL2"/>
</dbReference>
<dbReference type="InterPro" id="IPR005880">
    <property type="entry name" value="Ribosomal_uL2_bac/org-type"/>
</dbReference>
<dbReference type="InterPro" id="IPR022669">
    <property type="entry name" value="Ribosomal_uL2_C"/>
</dbReference>
<dbReference type="InterPro" id="IPR022671">
    <property type="entry name" value="Ribosomal_uL2_CS"/>
</dbReference>
<dbReference type="InterPro" id="IPR014726">
    <property type="entry name" value="Ribosomal_uL2_dom3"/>
</dbReference>
<dbReference type="InterPro" id="IPR022666">
    <property type="entry name" value="Ribosomal_uL2_RNA-bd_dom"/>
</dbReference>
<dbReference type="InterPro" id="IPR008991">
    <property type="entry name" value="Translation_prot_SH3-like_sf"/>
</dbReference>
<dbReference type="NCBIfam" id="TIGR01171">
    <property type="entry name" value="rplB_bact"/>
    <property type="match status" value="1"/>
</dbReference>
<dbReference type="PANTHER" id="PTHR13691:SF5">
    <property type="entry name" value="LARGE RIBOSOMAL SUBUNIT PROTEIN UL2M"/>
    <property type="match status" value="1"/>
</dbReference>
<dbReference type="PANTHER" id="PTHR13691">
    <property type="entry name" value="RIBOSOMAL PROTEIN L2"/>
    <property type="match status" value="1"/>
</dbReference>
<dbReference type="Pfam" id="PF00181">
    <property type="entry name" value="Ribosomal_L2"/>
    <property type="match status" value="1"/>
</dbReference>
<dbReference type="Pfam" id="PF03947">
    <property type="entry name" value="Ribosomal_L2_C"/>
    <property type="match status" value="1"/>
</dbReference>
<dbReference type="PIRSF" id="PIRSF002158">
    <property type="entry name" value="Ribosomal_L2"/>
    <property type="match status" value="1"/>
</dbReference>
<dbReference type="SMART" id="SM01383">
    <property type="entry name" value="Ribosomal_L2"/>
    <property type="match status" value="1"/>
</dbReference>
<dbReference type="SMART" id="SM01382">
    <property type="entry name" value="Ribosomal_L2_C"/>
    <property type="match status" value="1"/>
</dbReference>
<dbReference type="SUPFAM" id="SSF50249">
    <property type="entry name" value="Nucleic acid-binding proteins"/>
    <property type="match status" value="1"/>
</dbReference>
<dbReference type="SUPFAM" id="SSF50104">
    <property type="entry name" value="Translation proteins SH3-like domain"/>
    <property type="match status" value="1"/>
</dbReference>
<dbReference type="PROSITE" id="PS00467">
    <property type="entry name" value="RIBOSOMAL_L2"/>
    <property type="match status" value="1"/>
</dbReference>
<proteinExistence type="inferred from homology"/>